<accession>A5W985</accession>
<comment type="function">
    <text evidence="1">Responsible for synthesis of pseudouridine from uracil-55 in the psi GC loop of transfer RNAs.</text>
</comment>
<comment type="catalytic activity">
    <reaction evidence="1">
        <text>uridine(55) in tRNA = pseudouridine(55) in tRNA</text>
        <dbReference type="Rhea" id="RHEA:42532"/>
        <dbReference type="Rhea" id="RHEA-COMP:10101"/>
        <dbReference type="Rhea" id="RHEA-COMP:10102"/>
        <dbReference type="ChEBI" id="CHEBI:65314"/>
        <dbReference type="ChEBI" id="CHEBI:65315"/>
        <dbReference type="EC" id="5.4.99.25"/>
    </reaction>
</comment>
<comment type="similarity">
    <text evidence="1">Belongs to the pseudouridine synthase TruB family. Type 1 subfamily.</text>
</comment>
<evidence type="ECO:0000255" key="1">
    <source>
        <dbReference type="HAMAP-Rule" id="MF_01080"/>
    </source>
</evidence>
<keyword id="KW-0413">Isomerase</keyword>
<keyword id="KW-0819">tRNA processing</keyword>
<feature type="chain" id="PRO_1000084648" description="tRNA pseudouridine synthase B">
    <location>
        <begin position="1"/>
        <end position="305"/>
    </location>
</feature>
<feature type="active site" description="Nucleophile" evidence="1">
    <location>
        <position position="48"/>
    </location>
</feature>
<dbReference type="EC" id="5.4.99.25" evidence="1"/>
<dbReference type="EMBL" id="CP000712">
    <property type="protein sequence ID" value="ABQ80695.1"/>
    <property type="molecule type" value="Genomic_DNA"/>
</dbReference>
<dbReference type="SMR" id="A5W985"/>
<dbReference type="KEGG" id="ppf:Pput_4575"/>
<dbReference type="eggNOG" id="COG0130">
    <property type="taxonomic scope" value="Bacteria"/>
</dbReference>
<dbReference type="HOGENOM" id="CLU_032087_0_3_6"/>
<dbReference type="GO" id="GO:0003723">
    <property type="term" value="F:RNA binding"/>
    <property type="evidence" value="ECO:0007669"/>
    <property type="project" value="InterPro"/>
</dbReference>
<dbReference type="GO" id="GO:0160148">
    <property type="term" value="F:tRNA pseudouridine(55) synthase activity"/>
    <property type="evidence" value="ECO:0007669"/>
    <property type="project" value="UniProtKB-EC"/>
</dbReference>
<dbReference type="GO" id="GO:1990481">
    <property type="term" value="P:mRNA pseudouridine synthesis"/>
    <property type="evidence" value="ECO:0007669"/>
    <property type="project" value="TreeGrafter"/>
</dbReference>
<dbReference type="GO" id="GO:0031119">
    <property type="term" value="P:tRNA pseudouridine synthesis"/>
    <property type="evidence" value="ECO:0007669"/>
    <property type="project" value="UniProtKB-UniRule"/>
</dbReference>
<dbReference type="CDD" id="cd02573">
    <property type="entry name" value="PseudoU_synth_EcTruB"/>
    <property type="match status" value="1"/>
</dbReference>
<dbReference type="CDD" id="cd21152">
    <property type="entry name" value="PUA_TruB_bacterial"/>
    <property type="match status" value="1"/>
</dbReference>
<dbReference type="FunFam" id="2.30.130.10:FF:000012">
    <property type="entry name" value="tRNA pseudouridine synthase B"/>
    <property type="match status" value="1"/>
</dbReference>
<dbReference type="FunFam" id="3.30.2350.10:FF:000011">
    <property type="entry name" value="tRNA pseudouridine synthase B"/>
    <property type="match status" value="1"/>
</dbReference>
<dbReference type="Gene3D" id="3.30.2350.10">
    <property type="entry name" value="Pseudouridine synthase"/>
    <property type="match status" value="1"/>
</dbReference>
<dbReference type="Gene3D" id="2.30.130.10">
    <property type="entry name" value="PUA domain"/>
    <property type="match status" value="1"/>
</dbReference>
<dbReference type="HAMAP" id="MF_01080">
    <property type="entry name" value="TruB_bact"/>
    <property type="match status" value="1"/>
</dbReference>
<dbReference type="InterPro" id="IPR020103">
    <property type="entry name" value="PsdUridine_synth_cat_dom_sf"/>
</dbReference>
<dbReference type="InterPro" id="IPR002501">
    <property type="entry name" value="PsdUridine_synth_N"/>
</dbReference>
<dbReference type="InterPro" id="IPR015947">
    <property type="entry name" value="PUA-like_sf"/>
</dbReference>
<dbReference type="InterPro" id="IPR036974">
    <property type="entry name" value="PUA_sf"/>
</dbReference>
<dbReference type="InterPro" id="IPR014780">
    <property type="entry name" value="tRNA_psdUridine_synth_TruB"/>
</dbReference>
<dbReference type="InterPro" id="IPR015240">
    <property type="entry name" value="tRNA_sdUridine_synth_fam1_C"/>
</dbReference>
<dbReference type="InterPro" id="IPR032819">
    <property type="entry name" value="TruB_C"/>
</dbReference>
<dbReference type="NCBIfam" id="TIGR00431">
    <property type="entry name" value="TruB"/>
    <property type="match status" value="1"/>
</dbReference>
<dbReference type="PANTHER" id="PTHR13767:SF2">
    <property type="entry name" value="PSEUDOURIDYLATE SYNTHASE TRUB1"/>
    <property type="match status" value="1"/>
</dbReference>
<dbReference type="PANTHER" id="PTHR13767">
    <property type="entry name" value="TRNA-PSEUDOURIDINE SYNTHASE"/>
    <property type="match status" value="1"/>
</dbReference>
<dbReference type="Pfam" id="PF09157">
    <property type="entry name" value="TruB-C_2"/>
    <property type="match status" value="1"/>
</dbReference>
<dbReference type="Pfam" id="PF16198">
    <property type="entry name" value="TruB_C_2"/>
    <property type="match status" value="1"/>
</dbReference>
<dbReference type="Pfam" id="PF01509">
    <property type="entry name" value="TruB_N"/>
    <property type="match status" value="1"/>
</dbReference>
<dbReference type="SUPFAM" id="SSF55120">
    <property type="entry name" value="Pseudouridine synthase"/>
    <property type="match status" value="1"/>
</dbReference>
<dbReference type="SUPFAM" id="SSF88697">
    <property type="entry name" value="PUA domain-like"/>
    <property type="match status" value="1"/>
</dbReference>
<protein>
    <recommendedName>
        <fullName evidence="1">tRNA pseudouridine synthase B</fullName>
        <ecNumber evidence="1">5.4.99.25</ecNumber>
    </recommendedName>
    <alternativeName>
        <fullName evidence="1">tRNA pseudouridine(55) synthase</fullName>
        <shortName evidence="1">Psi55 synthase</shortName>
    </alternativeName>
    <alternativeName>
        <fullName evidence="1">tRNA pseudouridylate synthase</fullName>
    </alternativeName>
    <alternativeName>
        <fullName evidence="1">tRNA-uridine isomerase</fullName>
    </alternativeName>
</protein>
<gene>
    <name evidence="1" type="primary">truB</name>
    <name type="ordered locus">Pput_4575</name>
</gene>
<reference key="1">
    <citation type="submission" date="2007-05" db="EMBL/GenBank/DDBJ databases">
        <title>Complete sequence of Pseudomonas putida F1.</title>
        <authorList>
            <consortium name="US DOE Joint Genome Institute"/>
            <person name="Copeland A."/>
            <person name="Lucas S."/>
            <person name="Lapidus A."/>
            <person name="Barry K."/>
            <person name="Detter J.C."/>
            <person name="Glavina del Rio T."/>
            <person name="Hammon N."/>
            <person name="Israni S."/>
            <person name="Dalin E."/>
            <person name="Tice H."/>
            <person name="Pitluck S."/>
            <person name="Chain P."/>
            <person name="Malfatti S."/>
            <person name="Shin M."/>
            <person name="Vergez L."/>
            <person name="Schmutz J."/>
            <person name="Larimer F."/>
            <person name="Land M."/>
            <person name="Hauser L."/>
            <person name="Kyrpides N."/>
            <person name="Lykidis A."/>
            <person name="Parales R."/>
            <person name="Richardson P."/>
        </authorList>
    </citation>
    <scope>NUCLEOTIDE SEQUENCE [LARGE SCALE GENOMIC DNA]</scope>
    <source>
        <strain>ATCC 700007 / DSM 6899 / JCM 31910 / BCRC 17059 / LMG 24140 / F1</strain>
    </source>
</reference>
<sequence length="305" mass="33463">MAQVKRIRRNISGIILLDKPLGFTSNAALQKVRWLLNAEKAGHTGSLDPLATGVLPLCFGEATKFSQYLLDSDKGYETVMQMGQTTNTGDAEGEVLQTRDVTVGRADIEALLPRFRGPISQIPPMYSALKRDGQPLYKLARAGEVVEREARSVTINRLELLECEGTRARLSVGCSKGTYIRTLVEDIGEALGCGAYVAELRRTQAGPFALAQTVTLEELEQAHAEGGNEALDRFLMPSDSGLQDWPLVSLSEHSAFYWLHGQAVRAPDAPQFGMVRVQDHNARFIGIGEVSEDGRIAPRRLIRSE</sequence>
<proteinExistence type="inferred from homology"/>
<name>TRUB_PSEP1</name>
<organism>
    <name type="scientific">Pseudomonas putida (strain ATCC 700007 / DSM 6899 / JCM 31910 / BCRC 17059 / LMG 24140 / F1)</name>
    <dbReference type="NCBI Taxonomy" id="351746"/>
    <lineage>
        <taxon>Bacteria</taxon>
        <taxon>Pseudomonadati</taxon>
        <taxon>Pseudomonadota</taxon>
        <taxon>Gammaproteobacteria</taxon>
        <taxon>Pseudomonadales</taxon>
        <taxon>Pseudomonadaceae</taxon>
        <taxon>Pseudomonas</taxon>
    </lineage>
</organism>